<reference key="1">
    <citation type="submission" date="2007-05" db="EMBL/GenBank/DDBJ databases">
        <title>Complete sequence of chromosome of Psychrobacter sp. PRwf-1.</title>
        <authorList>
            <consortium name="US DOE Joint Genome Institute"/>
            <person name="Copeland A."/>
            <person name="Lucas S."/>
            <person name="Lapidus A."/>
            <person name="Barry K."/>
            <person name="Detter J.C."/>
            <person name="Glavina del Rio T."/>
            <person name="Hammon N."/>
            <person name="Israni S."/>
            <person name="Dalin E."/>
            <person name="Tice H."/>
            <person name="Pitluck S."/>
            <person name="Chain P."/>
            <person name="Malfatti S."/>
            <person name="Shin M."/>
            <person name="Vergez L."/>
            <person name="Schmutz J."/>
            <person name="Larimer F."/>
            <person name="Land M."/>
            <person name="Hauser L."/>
            <person name="Kyrpides N."/>
            <person name="Kim E."/>
            <person name="Tiedje J."/>
            <person name="Richardson P."/>
        </authorList>
    </citation>
    <scope>NUCLEOTIDE SEQUENCE [LARGE SCALE GENOMIC DNA]</scope>
    <source>
        <strain>PRwf-1</strain>
    </source>
</reference>
<comment type="function">
    <text evidence="1">Binds to the 23S rRNA.</text>
</comment>
<comment type="subunit">
    <text evidence="1">Part of the 50S ribosomal subunit.</text>
</comment>
<comment type="similarity">
    <text evidence="1">Belongs to the universal ribosomal protein uL15 family.</text>
</comment>
<evidence type="ECO:0000255" key="1">
    <source>
        <dbReference type="HAMAP-Rule" id="MF_01341"/>
    </source>
</evidence>
<evidence type="ECO:0000256" key="2">
    <source>
        <dbReference type="SAM" id="MobiDB-lite"/>
    </source>
</evidence>
<evidence type="ECO:0000305" key="3"/>
<name>RL15_PSYWF</name>
<proteinExistence type="inferred from homology"/>
<organism>
    <name type="scientific">Psychrobacter sp. (strain PRwf-1)</name>
    <dbReference type="NCBI Taxonomy" id="349106"/>
    <lineage>
        <taxon>Bacteria</taxon>
        <taxon>Pseudomonadati</taxon>
        <taxon>Pseudomonadota</taxon>
        <taxon>Gammaproteobacteria</taxon>
        <taxon>Moraxellales</taxon>
        <taxon>Moraxellaceae</taxon>
        <taxon>Psychrobacter</taxon>
    </lineage>
</organism>
<accession>A5WCK9</accession>
<feature type="chain" id="PRO_1000073316" description="Large ribosomal subunit protein uL15">
    <location>
        <begin position="1"/>
        <end position="152"/>
    </location>
</feature>
<feature type="region of interest" description="Disordered" evidence="2">
    <location>
        <begin position="1"/>
        <end position="54"/>
    </location>
</feature>
<feature type="compositionally biased region" description="Gly residues" evidence="2">
    <location>
        <begin position="24"/>
        <end position="37"/>
    </location>
</feature>
<protein>
    <recommendedName>
        <fullName evidence="1">Large ribosomal subunit protein uL15</fullName>
    </recommendedName>
    <alternativeName>
        <fullName evidence="3">50S ribosomal protein L15</fullName>
    </alternativeName>
</protein>
<keyword id="KW-0687">Ribonucleoprotein</keyword>
<keyword id="KW-0689">Ribosomal protein</keyword>
<keyword id="KW-0694">RNA-binding</keyword>
<keyword id="KW-0699">rRNA-binding</keyword>
<sequence>MGLKLNELSPGVGAKKTAHRKGRGIGSGLGKTGGRGVKGQKSRSGSGVRRGFEGGQMPLFRRVPKFGFTSQMALTTAEVRLSELNKIDGDVVSVETLKAANIIRHDMKRARIILSGEITKAYTFKGVKVTKGAKAAIEAAGGTVEVTEGTEE</sequence>
<dbReference type="EMBL" id="CP000713">
    <property type="protein sequence ID" value="ABQ93400.1"/>
    <property type="molecule type" value="Genomic_DNA"/>
</dbReference>
<dbReference type="SMR" id="A5WCK9"/>
<dbReference type="STRING" id="349106.PsycPRwf_0445"/>
<dbReference type="KEGG" id="prw:PsycPRwf_0445"/>
<dbReference type="eggNOG" id="COG0200">
    <property type="taxonomic scope" value="Bacteria"/>
</dbReference>
<dbReference type="HOGENOM" id="CLU_055188_4_2_6"/>
<dbReference type="GO" id="GO:0022625">
    <property type="term" value="C:cytosolic large ribosomal subunit"/>
    <property type="evidence" value="ECO:0007669"/>
    <property type="project" value="TreeGrafter"/>
</dbReference>
<dbReference type="GO" id="GO:0019843">
    <property type="term" value="F:rRNA binding"/>
    <property type="evidence" value="ECO:0007669"/>
    <property type="project" value="UniProtKB-UniRule"/>
</dbReference>
<dbReference type="GO" id="GO:0003735">
    <property type="term" value="F:structural constituent of ribosome"/>
    <property type="evidence" value="ECO:0007669"/>
    <property type="project" value="InterPro"/>
</dbReference>
<dbReference type="GO" id="GO:0006412">
    <property type="term" value="P:translation"/>
    <property type="evidence" value="ECO:0007669"/>
    <property type="project" value="UniProtKB-UniRule"/>
</dbReference>
<dbReference type="Gene3D" id="3.100.10.10">
    <property type="match status" value="1"/>
</dbReference>
<dbReference type="HAMAP" id="MF_01341">
    <property type="entry name" value="Ribosomal_uL15"/>
    <property type="match status" value="1"/>
</dbReference>
<dbReference type="InterPro" id="IPR030878">
    <property type="entry name" value="Ribosomal_uL15"/>
</dbReference>
<dbReference type="InterPro" id="IPR021131">
    <property type="entry name" value="Ribosomal_uL15/eL18"/>
</dbReference>
<dbReference type="InterPro" id="IPR036227">
    <property type="entry name" value="Ribosomal_uL15/eL18_sf"/>
</dbReference>
<dbReference type="InterPro" id="IPR005749">
    <property type="entry name" value="Ribosomal_uL15_bac-type"/>
</dbReference>
<dbReference type="NCBIfam" id="TIGR01071">
    <property type="entry name" value="rplO_bact"/>
    <property type="match status" value="1"/>
</dbReference>
<dbReference type="PANTHER" id="PTHR12934">
    <property type="entry name" value="50S RIBOSOMAL PROTEIN L15"/>
    <property type="match status" value="1"/>
</dbReference>
<dbReference type="PANTHER" id="PTHR12934:SF11">
    <property type="entry name" value="LARGE RIBOSOMAL SUBUNIT PROTEIN UL15M"/>
    <property type="match status" value="1"/>
</dbReference>
<dbReference type="Pfam" id="PF00828">
    <property type="entry name" value="Ribosomal_L27A"/>
    <property type="match status" value="1"/>
</dbReference>
<dbReference type="SUPFAM" id="SSF52080">
    <property type="entry name" value="Ribosomal proteins L15p and L18e"/>
    <property type="match status" value="1"/>
</dbReference>
<gene>
    <name evidence="1" type="primary">rplO</name>
    <name type="ordered locus">PsycPRwf_0445</name>
</gene>